<comment type="catalytic activity">
    <reaction>
        <text>D-ribulose 5-phosphate + ATP = D-ribulose 1,5-bisphosphate + ADP + H(+)</text>
        <dbReference type="Rhea" id="RHEA:19365"/>
        <dbReference type="ChEBI" id="CHEBI:15378"/>
        <dbReference type="ChEBI" id="CHEBI:30616"/>
        <dbReference type="ChEBI" id="CHEBI:57870"/>
        <dbReference type="ChEBI" id="CHEBI:58121"/>
        <dbReference type="ChEBI" id="CHEBI:456216"/>
        <dbReference type="EC" id="2.7.1.19"/>
    </reaction>
</comment>
<comment type="activity regulation">
    <text>Light regulated via thioredoxin by reversible oxidation/reduction of sulfhydryl/disulfide groups.</text>
</comment>
<comment type="pathway">
    <text>Carbohydrate biosynthesis; Calvin cycle.</text>
</comment>
<comment type="subcellular location">
    <subcellularLocation>
        <location>Plastid</location>
        <location>Chloroplast</location>
    </subcellularLocation>
</comment>
<comment type="similarity">
    <text evidence="2">Belongs to the phosphoribulokinase family.</text>
</comment>
<gene>
    <name type="ordered locus">At1g32060</name>
    <name type="ORF">T12O21.4</name>
</gene>
<name>KPPR_ARATH</name>
<dbReference type="EC" id="2.7.1.19"/>
<dbReference type="EMBL" id="X58149">
    <property type="protein sequence ID" value="CAA41155.1"/>
    <property type="molecule type" value="mRNA"/>
</dbReference>
<dbReference type="EMBL" id="AC074309">
    <property type="protein sequence ID" value="AAG50797.1"/>
    <property type="molecule type" value="Genomic_DNA"/>
</dbReference>
<dbReference type="EMBL" id="CP002684">
    <property type="protein sequence ID" value="AEE31430.1"/>
    <property type="molecule type" value="Genomic_DNA"/>
</dbReference>
<dbReference type="EMBL" id="AY044335">
    <property type="protein sequence ID" value="AAK73276.1"/>
    <property type="molecule type" value="mRNA"/>
</dbReference>
<dbReference type="EMBL" id="AY128355">
    <property type="protein sequence ID" value="AAM91558.1"/>
    <property type="molecule type" value="mRNA"/>
</dbReference>
<dbReference type="EMBL" id="BT000019">
    <property type="protein sequence ID" value="AAN15338.1"/>
    <property type="molecule type" value="mRNA"/>
</dbReference>
<dbReference type="EMBL" id="AY084576">
    <property type="protein sequence ID" value="AAM61142.1"/>
    <property type="molecule type" value="mRNA"/>
</dbReference>
<dbReference type="PIR" id="S16583">
    <property type="entry name" value="S16583"/>
</dbReference>
<dbReference type="RefSeq" id="NP_174486.1">
    <property type="nucleotide sequence ID" value="NM_102940.6"/>
</dbReference>
<dbReference type="PDB" id="6H7H">
    <property type="method" value="X-ray"/>
    <property type="resolution" value="2.47 A"/>
    <property type="chains" value="A/B=47-395"/>
</dbReference>
<dbReference type="PDB" id="6KEW">
    <property type="method" value="X-ray"/>
    <property type="resolution" value="2.29 A"/>
    <property type="chains" value="A/B=47-395"/>
</dbReference>
<dbReference type="PDB" id="6KEX">
    <property type="method" value="X-ray"/>
    <property type="resolution" value="2.50 A"/>
    <property type="chains" value="A/B/C/D=47-395"/>
</dbReference>
<dbReference type="PDB" id="6KEZ">
    <property type="method" value="X-ray"/>
    <property type="resolution" value="3.50 A"/>
    <property type="chains" value="I/J/K/L=47-395"/>
</dbReference>
<dbReference type="PDBsum" id="6H7H"/>
<dbReference type="PDBsum" id="6KEW"/>
<dbReference type="PDBsum" id="6KEX"/>
<dbReference type="PDBsum" id="6KEZ"/>
<dbReference type="SMR" id="P25697"/>
<dbReference type="BioGRID" id="25332">
    <property type="interactions" value="7"/>
</dbReference>
<dbReference type="FunCoup" id="P25697">
    <property type="interactions" value="1260"/>
</dbReference>
<dbReference type="IntAct" id="P25697">
    <property type="interactions" value="2"/>
</dbReference>
<dbReference type="STRING" id="3702.P25697"/>
<dbReference type="iPTMnet" id="P25697"/>
<dbReference type="MetOSite" id="P25697"/>
<dbReference type="PaxDb" id="3702-AT1G32060.1"/>
<dbReference type="ProteomicsDB" id="250765"/>
<dbReference type="EnsemblPlants" id="AT1G32060.1">
    <property type="protein sequence ID" value="AT1G32060.1"/>
    <property type="gene ID" value="AT1G32060"/>
</dbReference>
<dbReference type="GeneID" id="840098"/>
<dbReference type="Gramene" id="AT1G32060.1">
    <property type="protein sequence ID" value="AT1G32060.1"/>
    <property type="gene ID" value="AT1G32060"/>
</dbReference>
<dbReference type="KEGG" id="ath:AT1G32060"/>
<dbReference type="Araport" id="AT1G32060"/>
<dbReference type="TAIR" id="AT1G32060">
    <property type="gene designation" value="PRK"/>
</dbReference>
<dbReference type="eggNOG" id="KOG4203">
    <property type="taxonomic scope" value="Eukaryota"/>
</dbReference>
<dbReference type="HOGENOM" id="CLU_033590_1_0_1"/>
<dbReference type="InParanoid" id="P25697"/>
<dbReference type="OMA" id="GLKMRAT"/>
<dbReference type="OrthoDB" id="738517at2759"/>
<dbReference type="PhylomeDB" id="P25697"/>
<dbReference type="BioCyc" id="ARA:AT1G32060-MONOMER"/>
<dbReference type="BioCyc" id="MetaCyc:AT1G32060-MONOMER"/>
<dbReference type="BRENDA" id="2.7.1.19">
    <property type="organism ID" value="399"/>
</dbReference>
<dbReference type="UniPathway" id="UPA00116"/>
<dbReference type="CD-CODE" id="4299E36E">
    <property type="entry name" value="Nucleolus"/>
</dbReference>
<dbReference type="PRO" id="PR:P25697"/>
<dbReference type="Proteomes" id="UP000006548">
    <property type="component" value="Chromosome 1"/>
</dbReference>
<dbReference type="ExpressionAtlas" id="P25697">
    <property type="expression patterns" value="baseline and differential"/>
</dbReference>
<dbReference type="GO" id="GO:0048046">
    <property type="term" value="C:apoplast"/>
    <property type="evidence" value="ECO:0007005"/>
    <property type="project" value="TAIR"/>
</dbReference>
<dbReference type="GO" id="GO:0009507">
    <property type="term" value="C:chloroplast"/>
    <property type="evidence" value="ECO:0007005"/>
    <property type="project" value="TAIR"/>
</dbReference>
<dbReference type="GO" id="GO:0009941">
    <property type="term" value="C:chloroplast envelope"/>
    <property type="evidence" value="ECO:0007005"/>
    <property type="project" value="TAIR"/>
</dbReference>
<dbReference type="GO" id="GO:0009570">
    <property type="term" value="C:chloroplast stroma"/>
    <property type="evidence" value="ECO:0007005"/>
    <property type="project" value="TAIR"/>
</dbReference>
<dbReference type="GO" id="GO:0009535">
    <property type="term" value="C:chloroplast thylakoid membrane"/>
    <property type="evidence" value="ECO:0007005"/>
    <property type="project" value="TAIR"/>
</dbReference>
<dbReference type="GO" id="GO:0005634">
    <property type="term" value="C:nucleus"/>
    <property type="evidence" value="ECO:0007005"/>
    <property type="project" value="TAIR"/>
</dbReference>
<dbReference type="GO" id="GO:0010319">
    <property type="term" value="C:stromule"/>
    <property type="evidence" value="ECO:0000314"/>
    <property type="project" value="TAIR"/>
</dbReference>
<dbReference type="GO" id="GO:0099080">
    <property type="term" value="C:supramolecular complex"/>
    <property type="evidence" value="ECO:0000314"/>
    <property type="project" value="CAFA"/>
</dbReference>
<dbReference type="GO" id="GO:0009579">
    <property type="term" value="C:thylakoid"/>
    <property type="evidence" value="ECO:0007005"/>
    <property type="project" value="TAIR"/>
</dbReference>
<dbReference type="GO" id="GO:0005524">
    <property type="term" value="F:ATP binding"/>
    <property type="evidence" value="ECO:0007669"/>
    <property type="project" value="UniProtKB-KW"/>
</dbReference>
<dbReference type="GO" id="GO:0097718">
    <property type="term" value="F:disordered domain specific binding"/>
    <property type="evidence" value="ECO:0000353"/>
    <property type="project" value="CAFA"/>
</dbReference>
<dbReference type="GO" id="GO:0008974">
    <property type="term" value="F:phosphoribulokinase activity"/>
    <property type="evidence" value="ECO:0000314"/>
    <property type="project" value="CAFA"/>
</dbReference>
<dbReference type="GO" id="GO:0042803">
    <property type="term" value="F:protein homodimerization activity"/>
    <property type="evidence" value="ECO:0000314"/>
    <property type="project" value="CAFA"/>
</dbReference>
<dbReference type="GO" id="GO:0019253">
    <property type="term" value="P:reductive pentose-phosphate cycle"/>
    <property type="evidence" value="ECO:0007669"/>
    <property type="project" value="UniProtKB-UniPathway"/>
</dbReference>
<dbReference type="GO" id="GO:0009409">
    <property type="term" value="P:response to cold"/>
    <property type="evidence" value="ECO:0000270"/>
    <property type="project" value="TAIR"/>
</dbReference>
<dbReference type="CDD" id="cd02026">
    <property type="entry name" value="PRK"/>
    <property type="match status" value="1"/>
</dbReference>
<dbReference type="FunFam" id="3.40.50.300:FF:000619">
    <property type="entry name" value="Phosphoribulokinase"/>
    <property type="match status" value="1"/>
</dbReference>
<dbReference type="Gene3D" id="3.40.50.300">
    <property type="entry name" value="P-loop containing nucleotide triphosphate hydrolases"/>
    <property type="match status" value="1"/>
</dbReference>
<dbReference type="InterPro" id="IPR027417">
    <property type="entry name" value="P-loop_NTPase"/>
</dbReference>
<dbReference type="InterPro" id="IPR006082">
    <property type="entry name" value="PRK"/>
</dbReference>
<dbReference type="InterPro" id="IPR006083">
    <property type="entry name" value="PRK/URK"/>
</dbReference>
<dbReference type="NCBIfam" id="NF005655">
    <property type="entry name" value="PRK07429.1"/>
    <property type="match status" value="1"/>
</dbReference>
<dbReference type="PANTHER" id="PTHR10285">
    <property type="entry name" value="URIDINE KINASE"/>
    <property type="match status" value="1"/>
</dbReference>
<dbReference type="Pfam" id="PF00485">
    <property type="entry name" value="PRK"/>
    <property type="match status" value="1"/>
</dbReference>
<dbReference type="PRINTS" id="PR00478">
    <property type="entry name" value="PHRIBLKINASE"/>
</dbReference>
<dbReference type="SUPFAM" id="SSF52540">
    <property type="entry name" value="P-loop containing nucleoside triphosphate hydrolases"/>
    <property type="match status" value="1"/>
</dbReference>
<dbReference type="PROSITE" id="PS00567">
    <property type="entry name" value="PHOSPHORIBULOKINASE"/>
    <property type="match status" value="1"/>
</dbReference>
<proteinExistence type="evidence at protein level"/>
<protein>
    <recommendedName>
        <fullName>Phosphoribulokinase, chloroplastic</fullName>
        <shortName>PRK</shortName>
        <shortName>PRKase</shortName>
        <ecNumber>2.7.1.19</ecNumber>
    </recommendedName>
    <alternativeName>
        <fullName>Phosphopentokinase</fullName>
    </alternativeName>
</protein>
<accession>P25697</accession>
<keyword id="KW-0002">3D-structure</keyword>
<keyword id="KW-0067">ATP-binding</keyword>
<keyword id="KW-0113">Calvin cycle</keyword>
<keyword id="KW-0150">Chloroplast</keyword>
<keyword id="KW-1015">Disulfide bond</keyword>
<keyword id="KW-0418">Kinase</keyword>
<keyword id="KW-0547">Nucleotide-binding</keyword>
<keyword id="KW-0602">Photosynthesis</keyword>
<keyword id="KW-0934">Plastid</keyword>
<keyword id="KW-1185">Reference proteome</keyword>
<keyword id="KW-0808">Transferase</keyword>
<keyword id="KW-0809">Transit peptide</keyword>
<sequence length="395" mass="44464">MAVSTIYSTQALNSTHFLTSSSSSKQVFLYRRQPQTNRRFNTLITCAQETIVIGLAADSGCGKSTFMRRLTSVFGGAAKPPKGGNPDSNTLISDTTTVICLDDYHSLDRYGRKEQKVTALDPRANDFDLMYEQVKALKNGIAVEKPIYNHVTGLLDPPELIQPPKILVIEGLHPMFDERVRDLLDFSIYLDISNEVKFAWKIQRDMAERGHSLESIKASIEARKPDFDAFIDPQKQYADAVIEVLPTTLIPDDNEGKVLRVRLIMKEGVKYFSPVYLFDEGSTISWIPCGRKLTCSYPGIKFNYEPDSYFDHEVSVLEMDGQFDRLDELIYVESHLSNLSTKFYGEVTQQMLKHADFPGSNNGTGLFQTIVGLKIRDLYEQLIANKATARAEAKA</sequence>
<feature type="transit peptide" description="Chloroplast">
    <location>
        <begin position="1"/>
        <end position="46"/>
    </location>
</feature>
<feature type="chain" id="PRO_0000025751" description="Phosphoribulokinase, chloroplastic">
    <location>
        <begin position="47"/>
        <end position="395"/>
    </location>
</feature>
<feature type="disulfide bond" evidence="1">
    <location>
        <begin position="61"/>
        <end position="100"/>
    </location>
</feature>
<feature type="strand" evidence="4">
    <location>
        <begin position="51"/>
        <end position="56"/>
    </location>
</feature>
<feature type="turn" evidence="5">
    <location>
        <begin position="58"/>
        <end position="62"/>
    </location>
</feature>
<feature type="helix" evidence="4">
    <location>
        <begin position="65"/>
        <end position="74"/>
    </location>
</feature>
<feature type="strand" evidence="4">
    <location>
        <begin position="82"/>
        <end position="84"/>
    </location>
</feature>
<feature type="strand" evidence="4">
    <location>
        <begin position="94"/>
        <end position="100"/>
    </location>
</feature>
<feature type="helix" evidence="4">
    <location>
        <begin position="101"/>
        <end position="104"/>
    </location>
</feature>
<feature type="strand" evidence="4">
    <location>
        <begin position="105"/>
        <end position="107"/>
    </location>
</feature>
<feature type="helix" evidence="4">
    <location>
        <begin position="109"/>
        <end position="115"/>
    </location>
</feature>
<feature type="helix" evidence="4">
    <location>
        <begin position="122"/>
        <end position="124"/>
    </location>
</feature>
<feature type="helix" evidence="4">
    <location>
        <begin position="127"/>
        <end position="138"/>
    </location>
</feature>
<feature type="strand" evidence="4">
    <location>
        <begin position="143"/>
        <end position="148"/>
    </location>
</feature>
<feature type="turn" evidence="4">
    <location>
        <begin position="150"/>
        <end position="152"/>
    </location>
</feature>
<feature type="strand" evidence="4">
    <location>
        <begin position="155"/>
        <end position="161"/>
    </location>
</feature>
<feature type="strand" evidence="4">
    <location>
        <begin position="165"/>
        <end position="172"/>
    </location>
</feature>
<feature type="turn" evidence="3">
    <location>
        <begin position="174"/>
        <end position="176"/>
    </location>
</feature>
<feature type="helix" evidence="4">
    <location>
        <begin position="178"/>
        <end position="181"/>
    </location>
</feature>
<feature type="strand" evidence="4">
    <location>
        <begin position="185"/>
        <end position="192"/>
    </location>
</feature>
<feature type="helix" evidence="4">
    <location>
        <begin position="194"/>
        <end position="203"/>
    </location>
</feature>
<feature type="helix" evidence="4">
    <location>
        <begin position="206"/>
        <end position="208"/>
    </location>
</feature>
<feature type="helix" evidence="4">
    <location>
        <begin position="213"/>
        <end position="230"/>
    </location>
</feature>
<feature type="helix" evidence="4">
    <location>
        <begin position="232"/>
        <end position="237"/>
    </location>
</feature>
<feature type="strand" evidence="4">
    <location>
        <begin position="239"/>
        <end position="246"/>
    </location>
</feature>
<feature type="strand" evidence="4">
    <location>
        <begin position="248"/>
        <end position="250"/>
    </location>
</feature>
<feature type="strand" evidence="4">
    <location>
        <begin position="255"/>
        <end position="268"/>
    </location>
</feature>
<feature type="strand" evidence="4">
    <location>
        <begin position="276"/>
        <end position="279"/>
    </location>
</feature>
<feature type="strand" evidence="4">
    <location>
        <begin position="284"/>
        <end position="286"/>
    </location>
</feature>
<feature type="strand" evidence="4">
    <location>
        <begin position="290"/>
        <end position="293"/>
    </location>
</feature>
<feature type="strand" evidence="4">
    <location>
        <begin position="300"/>
        <end position="309"/>
    </location>
</feature>
<feature type="strand" evidence="4">
    <location>
        <begin position="312"/>
        <end position="322"/>
    </location>
</feature>
<feature type="helix" evidence="4">
    <location>
        <begin position="326"/>
        <end position="334"/>
    </location>
</feature>
<feature type="helix" evidence="4">
    <location>
        <begin position="346"/>
        <end position="352"/>
    </location>
</feature>
<feature type="turn" evidence="4">
    <location>
        <begin position="353"/>
        <end position="356"/>
    </location>
</feature>
<feature type="turn" evidence="4">
    <location>
        <begin position="358"/>
        <end position="361"/>
    </location>
</feature>
<feature type="helix" evidence="4">
    <location>
        <begin position="363"/>
        <end position="388"/>
    </location>
</feature>
<reference key="1">
    <citation type="journal article" date="1991" name="Plant Mol. Biol.">
        <title>Nucleotide sequence of a cDNA clone encoding chloroplast phosphoribulokinase from Arabidopsis thaliana.</title>
        <authorList>
            <person name="Horsnell P.R."/>
            <person name="Raines C.A."/>
        </authorList>
    </citation>
    <scope>NUCLEOTIDE SEQUENCE</scope>
    <source>
        <strain>cv. C24</strain>
    </source>
</reference>
<reference key="2">
    <citation type="journal article" date="2000" name="Nature">
        <title>Sequence and analysis of chromosome 1 of the plant Arabidopsis thaliana.</title>
        <authorList>
            <person name="Theologis A."/>
            <person name="Ecker J.R."/>
            <person name="Palm C.J."/>
            <person name="Federspiel N.A."/>
            <person name="Kaul S."/>
            <person name="White O."/>
            <person name="Alonso J."/>
            <person name="Altafi H."/>
            <person name="Araujo R."/>
            <person name="Bowman C.L."/>
            <person name="Brooks S.Y."/>
            <person name="Buehler E."/>
            <person name="Chan A."/>
            <person name="Chao Q."/>
            <person name="Chen H."/>
            <person name="Cheuk R.F."/>
            <person name="Chin C.W."/>
            <person name="Chung M.K."/>
            <person name="Conn L."/>
            <person name="Conway A.B."/>
            <person name="Conway A.R."/>
            <person name="Creasy T.H."/>
            <person name="Dewar K."/>
            <person name="Dunn P."/>
            <person name="Etgu P."/>
            <person name="Feldblyum T.V."/>
            <person name="Feng J.-D."/>
            <person name="Fong B."/>
            <person name="Fujii C.Y."/>
            <person name="Gill J.E."/>
            <person name="Goldsmith A.D."/>
            <person name="Haas B."/>
            <person name="Hansen N.F."/>
            <person name="Hughes B."/>
            <person name="Huizar L."/>
            <person name="Hunter J.L."/>
            <person name="Jenkins J."/>
            <person name="Johnson-Hopson C."/>
            <person name="Khan S."/>
            <person name="Khaykin E."/>
            <person name="Kim C.J."/>
            <person name="Koo H.L."/>
            <person name="Kremenetskaia I."/>
            <person name="Kurtz D.B."/>
            <person name="Kwan A."/>
            <person name="Lam B."/>
            <person name="Langin-Hooper S."/>
            <person name="Lee A."/>
            <person name="Lee J.M."/>
            <person name="Lenz C.A."/>
            <person name="Li J.H."/>
            <person name="Li Y.-P."/>
            <person name="Lin X."/>
            <person name="Liu S.X."/>
            <person name="Liu Z.A."/>
            <person name="Luros J.S."/>
            <person name="Maiti R."/>
            <person name="Marziali A."/>
            <person name="Militscher J."/>
            <person name="Miranda M."/>
            <person name="Nguyen M."/>
            <person name="Nierman W.C."/>
            <person name="Osborne B.I."/>
            <person name="Pai G."/>
            <person name="Peterson J."/>
            <person name="Pham P.K."/>
            <person name="Rizzo M."/>
            <person name="Rooney T."/>
            <person name="Rowley D."/>
            <person name="Sakano H."/>
            <person name="Salzberg S.L."/>
            <person name="Schwartz J.R."/>
            <person name="Shinn P."/>
            <person name="Southwick A.M."/>
            <person name="Sun H."/>
            <person name="Tallon L.J."/>
            <person name="Tambunga G."/>
            <person name="Toriumi M.J."/>
            <person name="Town C.D."/>
            <person name="Utterback T."/>
            <person name="Van Aken S."/>
            <person name="Vaysberg M."/>
            <person name="Vysotskaia V.S."/>
            <person name="Walker M."/>
            <person name="Wu D."/>
            <person name="Yu G."/>
            <person name="Fraser C.M."/>
            <person name="Venter J.C."/>
            <person name="Davis R.W."/>
        </authorList>
    </citation>
    <scope>NUCLEOTIDE SEQUENCE [LARGE SCALE GENOMIC DNA]</scope>
    <source>
        <strain>cv. Columbia</strain>
    </source>
</reference>
<reference key="3">
    <citation type="journal article" date="2017" name="Plant J.">
        <title>Araport11: a complete reannotation of the Arabidopsis thaliana reference genome.</title>
        <authorList>
            <person name="Cheng C.Y."/>
            <person name="Krishnakumar V."/>
            <person name="Chan A.P."/>
            <person name="Thibaud-Nissen F."/>
            <person name="Schobel S."/>
            <person name="Town C.D."/>
        </authorList>
    </citation>
    <scope>GENOME REANNOTATION</scope>
    <source>
        <strain>cv. Columbia</strain>
    </source>
</reference>
<reference key="4">
    <citation type="journal article" date="2003" name="Science">
        <title>Empirical analysis of transcriptional activity in the Arabidopsis genome.</title>
        <authorList>
            <person name="Yamada K."/>
            <person name="Lim J."/>
            <person name="Dale J.M."/>
            <person name="Chen H."/>
            <person name="Shinn P."/>
            <person name="Palm C.J."/>
            <person name="Southwick A.M."/>
            <person name="Wu H.C."/>
            <person name="Kim C.J."/>
            <person name="Nguyen M."/>
            <person name="Pham P.K."/>
            <person name="Cheuk R.F."/>
            <person name="Karlin-Newmann G."/>
            <person name="Liu S.X."/>
            <person name="Lam B."/>
            <person name="Sakano H."/>
            <person name="Wu T."/>
            <person name="Yu G."/>
            <person name="Miranda M."/>
            <person name="Quach H.L."/>
            <person name="Tripp M."/>
            <person name="Chang C.H."/>
            <person name="Lee J.M."/>
            <person name="Toriumi M.J."/>
            <person name="Chan M.M."/>
            <person name="Tang C.C."/>
            <person name="Onodera C.S."/>
            <person name="Deng J.M."/>
            <person name="Akiyama K."/>
            <person name="Ansari Y."/>
            <person name="Arakawa T."/>
            <person name="Banh J."/>
            <person name="Banno F."/>
            <person name="Bowser L."/>
            <person name="Brooks S.Y."/>
            <person name="Carninci P."/>
            <person name="Chao Q."/>
            <person name="Choy N."/>
            <person name="Enju A."/>
            <person name="Goldsmith A.D."/>
            <person name="Gurjal M."/>
            <person name="Hansen N.F."/>
            <person name="Hayashizaki Y."/>
            <person name="Johnson-Hopson C."/>
            <person name="Hsuan V.W."/>
            <person name="Iida K."/>
            <person name="Karnes M."/>
            <person name="Khan S."/>
            <person name="Koesema E."/>
            <person name="Ishida J."/>
            <person name="Jiang P.X."/>
            <person name="Jones T."/>
            <person name="Kawai J."/>
            <person name="Kamiya A."/>
            <person name="Meyers C."/>
            <person name="Nakajima M."/>
            <person name="Narusaka M."/>
            <person name="Seki M."/>
            <person name="Sakurai T."/>
            <person name="Satou M."/>
            <person name="Tamse R."/>
            <person name="Vaysberg M."/>
            <person name="Wallender E.K."/>
            <person name="Wong C."/>
            <person name="Yamamura Y."/>
            <person name="Yuan S."/>
            <person name="Shinozaki K."/>
            <person name="Davis R.W."/>
            <person name="Theologis A."/>
            <person name="Ecker J.R."/>
        </authorList>
    </citation>
    <scope>NUCLEOTIDE SEQUENCE [LARGE SCALE MRNA]</scope>
    <source>
        <strain>cv. Columbia</strain>
    </source>
</reference>
<reference key="5">
    <citation type="submission" date="2002-03" db="EMBL/GenBank/DDBJ databases">
        <title>Full-length cDNA from Arabidopsis thaliana.</title>
        <authorList>
            <person name="Brover V.V."/>
            <person name="Troukhan M.E."/>
            <person name="Alexandrov N.A."/>
            <person name="Lu Y.-P."/>
            <person name="Flavell R.B."/>
            <person name="Feldmann K.A."/>
        </authorList>
    </citation>
    <scope>NUCLEOTIDE SEQUENCE [LARGE SCALE MRNA]</scope>
</reference>
<evidence type="ECO:0000250" key="1"/>
<evidence type="ECO:0000305" key="2"/>
<evidence type="ECO:0007829" key="3">
    <source>
        <dbReference type="PDB" id="6H7H"/>
    </source>
</evidence>
<evidence type="ECO:0007829" key="4">
    <source>
        <dbReference type="PDB" id="6KEW"/>
    </source>
</evidence>
<evidence type="ECO:0007829" key="5">
    <source>
        <dbReference type="PDB" id="6KEZ"/>
    </source>
</evidence>
<organism>
    <name type="scientific">Arabidopsis thaliana</name>
    <name type="common">Mouse-ear cress</name>
    <dbReference type="NCBI Taxonomy" id="3702"/>
    <lineage>
        <taxon>Eukaryota</taxon>
        <taxon>Viridiplantae</taxon>
        <taxon>Streptophyta</taxon>
        <taxon>Embryophyta</taxon>
        <taxon>Tracheophyta</taxon>
        <taxon>Spermatophyta</taxon>
        <taxon>Magnoliopsida</taxon>
        <taxon>eudicotyledons</taxon>
        <taxon>Gunneridae</taxon>
        <taxon>Pentapetalae</taxon>
        <taxon>rosids</taxon>
        <taxon>malvids</taxon>
        <taxon>Brassicales</taxon>
        <taxon>Brassicaceae</taxon>
        <taxon>Camelineae</taxon>
        <taxon>Arabidopsis</taxon>
    </lineage>
</organism>